<feature type="signal peptide" evidence="4">
    <location>
        <begin position="1"/>
        <end position="24"/>
    </location>
</feature>
<feature type="chain" id="PRO_5000145662" description="Murinoglobulin-1" evidence="4">
    <location>
        <begin position="25"/>
        <end position="1487"/>
    </location>
</feature>
<feature type="region of interest" description="Bait region" evidence="3">
    <location>
        <begin position="686"/>
        <end position="745"/>
    </location>
</feature>
<feature type="glycosylation site" description="N-linked (GlcNAc...) asparagine" evidence="4">
    <location>
        <position position="55"/>
    </location>
</feature>
<feature type="glycosylation site" description="N-linked (GlcNAc...) asparagine" evidence="4">
    <location>
        <position position="247"/>
    </location>
</feature>
<feature type="glycosylation site" description="N-linked (GlcNAc...) asparagine" evidence="4">
    <location>
        <position position="301"/>
    </location>
</feature>
<feature type="glycosylation site" description="N-linked (GlcNAc...) asparagine" evidence="4">
    <location>
        <position position="321"/>
    </location>
</feature>
<feature type="glycosylation site" description="N-linked (GlcNAc...) asparagine" evidence="4">
    <location>
        <position position="393"/>
    </location>
</feature>
<feature type="glycosylation site" description="N-linked (GlcNAc...) asparagine" evidence="4">
    <location>
        <position position="508"/>
    </location>
</feature>
<feature type="glycosylation site" description="N-linked (GlcNAc...) asparagine" evidence="4">
    <location>
        <position position="760"/>
    </location>
</feature>
<feature type="glycosylation site" description="N-linked (GlcNAc...) asparagine" evidence="4">
    <location>
        <position position="787"/>
    </location>
</feature>
<feature type="glycosylation site" description="N-linked (GlcNAc...) asparagine" evidence="4">
    <location>
        <position position="882"/>
    </location>
</feature>
<feature type="glycosylation site" description="N-linked (GlcNAc...) asparagine" evidence="4">
    <location>
        <position position="1004"/>
    </location>
</feature>
<feature type="glycosylation site" description="N-linked (GlcNAc...) asparagine" evidence="4">
    <location>
        <position position="1153"/>
    </location>
</feature>
<feature type="glycosylation site" description="N-linked (GlcNAc...) asparagine" evidence="4">
    <location>
        <position position="1324"/>
    </location>
</feature>
<feature type="glycosylation site" description="N-linked (GlcNAc...) asparagine" evidence="4">
    <location>
        <position position="1437"/>
    </location>
</feature>
<feature type="disulfide bond" evidence="1">
    <location>
        <begin position="48"/>
        <end position="86"/>
    </location>
</feature>
<feature type="disulfide bond" evidence="1">
    <location>
        <begin position="251"/>
        <end position="283"/>
    </location>
</feature>
<feature type="disulfide bond" evidence="1">
    <location>
        <begin position="269"/>
        <end position="295"/>
    </location>
</feature>
<feature type="disulfide bond" evidence="1">
    <location>
        <begin position="468"/>
        <end position="563"/>
    </location>
</feature>
<feature type="disulfide bond" evidence="1">
    <location>
        <begin position="595"/>
        <end position="784"/>
    </location>
</feature>
<feature type="disulfide bond" evidence="1">
    <location>
        <begin position="643"/>
        <end position="689"/>
    </location>
</feature>
<feature type="disulfide bond" evidence="1">
    <location>
        <begin position="860"/>
        <end position="896"/>
    </location>
</feature>
<feature type="disulfide bond" evidence="1">
    <location>
        <begin position="934"/>
        <end position="1334"/>
    </location>
</feature>
<feature type="disulfide bond" evidence="1">
    <location>
        <begin position="1092"/>
        <end position="1140"/>
    </location>
</feature>
<feature type="disulfide bond" evidence="1">
    <location>
        <begin position="1365"/>
        <end position="1480"/>
    </location>
</feature>
<feature type="cross-link" description="Isoglutamyl cysteine thioester (Cys-Gln)" evidence="1">
    <location>
        <begin position="985"/>
        <end position="988"/>
    </location>
</feature>
<feature type="splice variant" id="VSP_052263" description="In isoform 2." evidence="8">
    <location>
        <begin position="263"/>
        <end position="268"/>
    </location>
</feature>
<feature type="sequence conflict" description="In Ref. 3; BAA00750." evidence="9" ref="3">
    <original>V</original>
    <variation>R</variation>
    <location>
        <position position="1157"/>
    </location>
</feature>
<feature type="sequence conflict" description="In Ref. 3; BAA00750." evidence="9" ref="3">
    <original>T</original>
    <variation>A</variation>
    <location>
        <position position="1252"/>
    </location>
</feature>
<proteinExistence type="evidence at transcript level"/>
<keyword id="KW-0011">Acute phase</keyword>
<keyword id="KW-0025">Alternative splicing</keyword>
<keyword id="KW-0082">Bait region</keyword>
<keyword id="KW-1015">Disulfide bond</keyword>
<keyword id="KW-0325">Glycoprotein</keyword>
<keyword id="KW-0646">Protease inhibitor</keyword>
<keyword id="KW-1185">Reference proteome</keyword>
<keyword id="KW-0964">Secreted</keyword>
<keyword id="KW-0722">Serine protease inhibitor</keyword>
<keyword id="KW-0732">Signal</keyword>
<keyword id="KW-0882">Thioester bond</keyword>
<organism>
    <name type="scientific">Rattus norvegicus</name>
    <name type="common">Rat</name>
    <dbReference type="NCBI Taxonomy" id="10116"/>
    <lineage>
        <taxon>Eukaryota</taxon>
        <taxon>Metazoa</taxon>
        <taxon>Chordata</taxon>
        <taxon>Craniata</taxon>
        <taxon>Vertebrata</taxon>
        <taxon>Euteleostomi</taxon>
        <taxon>Mammalia</taxon>
        <taxon>Eutheria</taxon>
        <taxon>Euarchontoglires</taxon>
        <taxon>Glires</taxon>
        <taxon>Rodentia</taxon>
        <taxon>Myomorpha</taxon>
        <taxon>Muroidea</taxon>
        <taxon>Muridae</taxon>
        <taxon>Murinae</taxon>
        <taxon>Rattus</taxon>
    </lineage>
</organism>
<reference evidence="9 12" key="1">
    <citation type="journal article" date="1991" name="FEBS Lett.">
        <title>Differential regulation of the two mRNA species of the rodent negative acute phase protein alpha 1-inhibitor 3.</title>
        <authorList>
            <person name="Regler R."/>
            <person name="Sickinger S."/>
            <person name="Schweizer M."/>
        </authorList>
    </citation>
    <scope>NUCLEOTIDE SEQUENCE [MRNA] (ISOFORM 1)</scope>
    <scope>NUCLEOTIDE SEQUENCE [GENOMIC DNA] OF 1-161</scope>
    <scope>INDUCTION</scope>
    <source>
        <strain evidence="12">Sprague-Dawley</strain>
        <tissue evidence="12">Liver</tissue>
    </source>
</reference>
<reference evidence="9 10" key="2">
    <citation type="journal article" date="1988" name="J. Biol. Chem.">
        <title>Sequence and acute phase regulation of rat alpha 1-inhibitor III messenger RNA.</title>
        <authorList>
            <person name="Braciak T.A."/>
            <person name="Northemann W."/>
            <person name="Hudson G.O."/>
            <person name="Shiels B.R."/>
            <person name="Gehring M.R."/>
            <person name="Fey G.H."/>
        </authorList>
    </citation>
    <scope>NUCLEOTIDE SEQUENCE [MRNA] OF 1-409 (ISOFORM 2)</scope>
    <source>
        <strain evidence="10">Fischer 344</strain>
        <tissue>Liver</tissue>
    </source>
</reference>
<reference evidence="9 11" key="3">
    <citation type="journal article" date="1989" name="Jpn. J. Cancer Res.">
        <title>Tumor-associated expression of a serum protein, termed alpha X protein (alpha 1-inhibitor III), and its mRNA in rat liver.</title>
        <authorList>
            <person name="Sugiyama K."/>
            <person name="Izumi S."/>
            <person name="Tomino S."/>
            <person name="Nagase S."/>
        </authorList>
    </citation>
    <scope>NUCLEOTIDE SEQUENCE [MRNA] OF 1157-1254</scope>
    <scope>SUBCELLULAR LOCATION</scope>
    <scope>TISSUE SPECIFICITY</scope>
    <scope>INDUCTION</scope>
    <source>
        <tissue evidence="11">Liver</tissue>
    </source>
</reference>
<accession>Q03626</accession>
<accession>Q03310</accession>
<accession>Q63018</accession>
<accession>Q63020</accession>
<accession>Q63023</accession>
<accession>Q78DZ4</accession>
<accession>Q9JMK7</accession>
<dbReference type="EMBL" id="X52984">
    <property type="protein sequence ID" value="CAA37176.1"/>
    <property type="molecule type" value="mRNA"/>
</dbReference>
<dbReference type="EMBL" id="X66454">
    <property type="protein sequence ID" value="CAA47070.1"/>
    <property type="molecule type" value="Genomic_DNA"/>
</dbReference>
<dbReference type="EMBL" id="M22358">
    <property type="protein sequence ID" value="AAA40629.1"/>
    <property type="molecule type" value="mRNA"/>
</dbReference>
<dbReference type="EMBL" id="M22360">
    <property type="protein sequence ID" value="AAA40633.1"/>
    <property type="molecule type" value="mRNA"/>
</dbReference>
<dbReference type="EMBL" id="M22361">
    <property type="protein sequence ID" value="AAA40631.1"/>
    <property type="molecule type" value="mRNA"/>
</dbReference>
<dbReference type="EMBL" id="D00873">
    <property type="protein sequence ID" value="BAA00750.1"/>
    <property type="molecule type" value="mRNA"/>
</dbReference>
<dbReference type="PIR" id="JL0112">
    <property type="entry name" value="JL0112"/>
</dbReference>
<dbReference type="PIR" id="S15904">
    <property type="entry name" value="S15904"/>
</dbReference>
<dbReference type="RefSeq" id="NP_075591.1">
    <molecule id="Q03626-1"/>
    <property type="nucleotide sequence ID" value="NM_023103.1"/>
</dbReference>
<dbReference type="SMR" id="Q03626"/>
<dbReference type="BioGRID" id="269104">
    <property type="interactions" value="1"/>
</dbReference>
<dbReference type="FunCoup" id="Q03626">
    <property type="interactions" value="91"/>
</dbReference>
<dbReference type="IntAct" id="Q03626">
    <property type="interactions" value="1"/>
</dbReference>
<dbReference type="STRING" id="10116.ENSRNOP00000019969"/>
<dbReference type="MEROPS" id="I39.004"/>
<dbReference type="CarbonylDB" id="Q03626"/>
<dbReference type="GlyCosmos" id="Q03626">
    <property type="glycosylation" value="13 sites, 6 glycans"/>
</dbReference>
<dbReference type="GlyGen" id="Q03626">
    <property type="glycosylation" value="14 sites, 6 N-linked glycans (1 site), 1 O-linked glycan (1 site)"/>
</dbReference>
<dbReference type="iPTMnet" id="Q03626"/>
<dbReference type="PhosphoSitePlus" id="Q03626"/>
<dbReference type="PaxDb" id="10116-ENSRNOP00000019969"/>
<dbReference type="GeneID" id="497794"/>
<dbReference type="KEGG" id="rno:497794"/>
<dbReference type="UCSC" id="RGD:621366">
    <molecule id="Q03626-1"/>
    <property type="organism name" value="rat"/>
</dbReference>
<dbReference type="AGR" id="RGD:621366"/>
<dbReference type="CTD" id="17836"/>
<dbReference type="RGD" id="621366">
    <property type="gene designation" value="Mug1"/>
</dbReference>
<dbReference type="eggNOG" id="KOG1366">
    <property type="taxonomic scope" value="Eukaryota"/>
</dbReference>
<dbReference type="InParanoid" id="Q03626"/>
<dbReference type="OrthoDB" id="9998011at2759"/>
<dbReference type="PhylomeDB" id="Q03626"/>
<dbReference type="PRO" id="PR:Q03626"/>
<dbReference type="Proteomes" id="UP000002494">
    <property type="component" value="Unplaced"/>
</dbReference>
<dbReference type="GO" id="GO:0005615">
    <property type="term" value="C:extracellular space"/>
    <property type="evidence" value="ECO:0007669"/>
    <property type="project" value="InterPro"/>
</dbReference>
<dbReference type="GO" id="GO:0004866">
    <property type="term" value="F:endopeptidase inhibitor activity"/>
    <property type="evidence" value="ECO:0000318"/>
    <property type="project" value="GO_Central"/>
</dbReference>
<dbReference type="GO" id="GO:0030414">
    <property type="term" value="F:peptidase inhibitor activity"/>
    <property type="evidence" value="ECO:0000304"/>
    <property type="project" value="RGD"/>
</dbReference>
<dbReference type="GO" id="GO:0002020">
    <property type="term" value="F:protease binding"/>
    <property type="evidence" value="ECO:0000318"/>
    <property type="project" value="GO_Central"/>
</dbReference>
<dbReference type="GO" id="GO:0004867">
    <property type="term" value="F:serine-type endopeptidase inhibitor activity"/>
    <property type="evidence" value="ECO:0007669"/>
    <property type="project" value="UniProtKB-KW"/>
</dbReference>
<dbReference type="GO" id="GO:0006953">
    <property type="term" value="P:acute-phase response"/>
    <property type="evidence" value="ECO:0007669"/>
    <property type="project" value="UniProtKB-KW"/>
</dbReference>
<dbReference type="GO" id="GO:0007566">
    <property type="term" value="P:embryo implantation"/>
    <property type="evidence" value="ECO:0000266"/>
    <property type="project" value="RGD"/>
</dbReference>
<dbReference type="CDD" id="cd02897">
    <property type="entry name" value="A2M_2"/>
    <property type="match status" value="1"/>
</dbReference>
<dbReference type="FunFam" id="2.60.40.10:FF:000312">
    <property type="entry name" value="Alpha-2-macroglobulin like 1"/>
    <property type="match status" value="1"/>
</dbReference>
<dbReference type="FunFam" id="1.50.10.20:FF:000001">
    <property type="entry name" value="CD109 isoform 1"/>
    <property type="match status" value="1"/>
</dbReference>
<dbReference type="FunFam" id="2.60.40.1930:FF:000001">
    <property type="entry name" value="CD109 isoform 3"/>
    <property type="match status" value="1"/>
</dbReference>
<dbReference type="FunFam" id="2.60.40.10:FF:001760">
    <property type="entry name" value="Murinoglobulin-1"/>
    <property type="match status" value="1"/>
</dbReference>
<dbReference type="FunFam" id="2.60.40.1940:FF:000007">
    <property type="entry name" value="Murinoglobulin-1"/>
    <property type="match status" value="1"/>
</dbReference>
<dbReference type="FunFam" id="2.20.130.20:FF:000004">
    <property type="entry name" value="PZP, alpha-2-macroglobulin like"/>
    <property type="match status" value="1"/>
</dbReference>
<dbReference type="FunFam" id="2.60.40.1930:FF:000002">
    <property type="entry name" value="PZP, alpha-2-macroglobulin like"/>
    <property type="match status" value="1"/>
</dbReference>
<dbReference type="FunFam" id="2.60.40.690:FF:000001">
    <property type="entry name" value="PZP, alpha-2-macroglobulin like"/>
    <property type="match status" value="1"/>
</dbReference>
<dbReference type="Gene3D" id="1.50.10.20">
    <property type="match status" value="1"/>
</dbReference>
<dbReference type="Gene3D" id="2.20.130.20">
    <property type="match status" value="1"/>
</dbReference>
<dbReference type="Gene3D" id="2.60.120.1540">
    <property type="match status" value="1"/>
</dbReference>
<dbReference type="Gene3D" id="2.60.40.1930">
    <property type="match status" value="2"/>
</dbReference>
<dbReference type="Gene3D" id="2.60.40.1940">
    <property type="match status" value="1"/>
</dbReference>
<dbReference type="Gene3D" id="6.20.50.160">
    <property type="match status" value="1"/>
</dbReference>
<dbReference type="Gene3D" id="2.60.40.690">
    <property type="entry name" value="Alpha-macroglobulin, receptor-binding domain"/>
    <property type="match status" value="1"/>
</dbReference>
<dbReference type="Gene3D" id="2.60.40.10">
    <property type="entry name" value="Immunoglobulins"/>
    <property type="match status" value="2"/>
</dbReference>
<dbReference type="InterPro" id="IPR009048">
    <property type="entry name" value="A-macroglobulin_rcpt-bd"/>
</dbReference>
<dbReference type="InterPro" id="IPR036595">
    <property type="entry name" value="A-macroglobulin_rcpt-bd_sf"/>
</dbReference>
<dbReference type="InterPro" id="IPR050473">
    <property type="entry name" value="A2M/Complement_sys"/>
</dbReference>
<dbReference type="InterPro" id="IPR011625">
    <property type="entry name" value="A2M_N_BRD"/>
</dbReference>
<dbReference type="InterPro" id="IPR041813">
    <property type="entry name" value="A2M_TED"/>
</dbReference>
<dbReference type="InterPro" id="IPR047565">
    <property type="entry name" value="Alpha-macroglob_thiol-ester_cl"/>
</dbReference>
<dbReference type="InterPro" id="IPR011626">
    <property type="entry name" value="Alpha-macroglobulin_TED"/>
</dbReference>
<dbReference type="InterPro" id="IPR013783">
    <property type="entry name" value="Ig-like_fold"/>
</dbReference>
<dbReference type="InterPro" id="IPR014756">
    <property type="entry name" value="Ig_E-set"/>
</dbReference>
<dbReference type="InterPro" id="IPR001599">
    <property type="entry name" value="Macroglobln_a2"/>
</dbReference>
<dbReference type="InterPro" id="IPR019742">
    <property type="entry name" value="MacrogloblnA2_CS"/>
</dbReference>
<dbReference type="InterPro" id="IPR002890">
    <property type="entry name" value="MG2"/>
</dbReference>
<dbReference type="InterPro" id="IPR041555">
    <property type="entry name" value="MG3"/>
</dbReference>
<dbReference type="InterPro" id="IPR040839">
    <property type="entry name" value="MG4"/>
</dbReference>
<dbReference type="InterPro" id="IPR008930">
    <property type="entry name" value="Terpenoid_cyclase/PrenylTrfase"/>
</dbReference>
<dbReference type="InterPro" id="IPR010916">
    <property type="entry name" value="TonB_box_CS"/>
</dbReference>
<dbReference type="PANTHER" id="PTHR11412">
    <property type="entry name" value="MACROGLOBULIN / COMPLEMENT"/>
    <property type="match status" value="1"/>
</dbReference>
<dbReference type="PANTHER" id="PTHR11412:SF133">
    <property type="entry name" value="MURINOGLOBULIN-1-RELATED"/>
    <property type="match status" value="1"/>
</dbReference>
<dbReference type="Pfam" id="PF00207">
    <property type="entry name" value="A2M"/>
    <property type="match status" value="1"/>
</dbReference>
<dbReference type="Pfam" id="PF07703">
    <property type="entry name" value="A2M_BRD"/>
    <property type="match status" value="1"/>
</dbReference>
<dbReference type="Pfam" id="PF07677">
    <property type="entry name" value="A2M_recep"/>
    <property type="match status" value="1"/>
</dbReference>
<dbReference type="Pfam" id="PF01835">
    <property type="entry name" value="MG2"/>
    <property type="match status" value="1"/>
</dbReference>
<dbReference type="Pfam" id="PF17791">
    <property type="entry name" value="MG3"/>
    <property type="match status" value="1"/>
</dbReference>
<dbReference type="Pfam" id="PF17789">
    <property type="entry name" value="MG4"/>
    <property type="match status" value="1"/>
</dbReference>
<dbReference type="Pfam" id="PF07678">
    <property type="entry name" value="TED_complement"/>
    <property type="match status" value="1"/>
</dbReference>
<dbReference type="SMART" id="SM01360">
    <property type="entry name" value="A2M"/>
    <property type="match status" value="1"/>
</dbReference>
<dbReference type="SMART" id="SM01359">
    <property type="entry name" value="A2M_N_2"/>
    <property type="match status" value="1"/>
</dbReference>
<dbReference type="SMART" id="SM01361">
    <property type="entry name" value="A2M_recep"/>
    <property type="match status" value="1"/>
</dbReference>
<dbReference type="SMART" id="SM01419">
    <property type="entry name" value="Thiol-ester_cl"/>
    <property type="match status" value="1"/>
</dbReference>
<dbReference type="SUPFAM" id="SSF49410">
    <property type="entry name" value="Alpha-macroglobulin receptor domain"/>
    <property type="match status" value="1"/>
</dbReference>
<dbReference type="SUPFAM" id="SSF81296">
    <property type="entry name" value="E set domains"/>
    <property type="match status" value="1"/>
</dbReference>
<dbReference type="SUPFAM" id="SSF48239">
    <property type="entry name" value="Terpenoid cyclases/Protein prenyltransferases"/>
    <property type="match status" value="1"/>
</dbReference>
<dbReference type="PROSITE" id="PS00477">
    <property type="entry name" value="ALPHA_2_MACROGLOBULIN"/>
    <property type="match status" value="1"/>
</dbReference>
<evidence type="ECO:0000250" key="1">
    <source>
        <dbReference type="UniProtKB" id="P01023"/>
    </source>
</evidence>
<evidence type="ECO:0000250" key="2">
    <source>
        <dbReference type="UniProtKB" id="P14046"/>
    </source>
</evidence>
<evidence type="ECO:0000250" key="3">
    <source>
        <dbReference type="UniProtKB" id="P28665"/>
    </source>
</evidence>
<evidence type="ECO:0000255" key="4"/>
<evidence type="ECO:0000269" key="5">
    <source>
    </source>
</evidence>
<evidence type="ECO:0000269" key="6">
    <source>
    </source>
</evidence>
<evidence type="ECO:0000269" key="7">
    <source>
    </source>
</evidence>
<evidence type="ECO:0000303" key="8">
    <source>
    </source>
</evidence>
<evidence type="ECO:0000305" key="9"/>
<evidence type="ECO:0000312" key="10">
    <source>
        <dbReference type="EMBL" id="AAA40633.1"/>
    </source>
</evidence>
<evidence type="ECO:0000312" key="11">
    <source>
        <dbReference type="EMBL" id="BAA00750.1"/>
    </source>
</evidence>
<evidence type="ECO:0000312" key="12">
    <source>
        <dbReference type="EMBL" id="CAA37176.1"/>
    </source>
</evidence>
<evidence type="ECO:0000312" key="13">
    <source>
        <dbReference type="RGD" id="621366"/>
    </source>
</evidence>
<comment type="function">
    <text evidence="9">A proteinase activates the inhibitor by specific proteolysis in the bait region, which, by an unknown mechanism leads to reaction at the cysteinyl-glutamyl internal thiol ester site and to a conformational change, whereby the proteinase is trapped and/or covalently bound to the inhibitor. While in the tetrameric proteinase inhibitors steric inhibition is sufficiently strong, monomeric forms need a covalent linkage between the activated glutamyl residue of the original thiol ester and a terminal amino group of a lysine or another nucleophilic group on the proteinase, for inhibition to be effective.</text>
</comment>
<comment type="subunit">
    <text evidence="2">Monomer.</text>
</comment>
<comment type="subcellular location">
    <subcellularLocation>
        <location evidence="6">Secreted</location>
    </subcellularLocation>
</comment>
<comment type="alternative products">
    <event type="alternative splicing"/>
    <isoform>
        <id>Q03626-1</id>
        <name evidence="5">1</name>
        <sequence type="displayed"/>
    </isoform>
    <isoform>
        <id>Q03626-2</id>
        <name evidence="7">2</name>
        <sequence type="described" ref="VSP_052263"/>
    </isoform>
</comment>
<comment type="tissue specificity">
    <text evidence="6">Plasma.</text>
</comment>
<comment type="induction">
    <text evidence="5 6">Expression level in the liver as well as protein level in plasma down-regulated by up to 70% during acute inflammation or tumor development.</text>
</comment>
<comment type="similarity">
    <text evidence="4">Belongs to the protease inhibitor I39 (alpha-2-macroglobulin) family.</text>
</comment>
<sequence length="1487" mass="165326">MKKNREAQLCLFSALLAFLPFASLLNGNSKYMVLVPSQLYTETPEKICLHLYHLNETVTVTASLISQRGTRKLFDELVVDKDLFHCLSFTIPRLPSSEEEESLDINIEGAKHKFSERRVVLVKNKESVVFVQTDKPVYKPGQSVKFRVVSMDKNLHPLNELFPLAYIEDPKMNRIMQWQDIKTENGLKQLSFSLSAEPIQGPYKIVILKQSGVKEEHSFTVMEFVLPRFGVDVKVPNAISVYDEIINVTACAIYTYGKPVPGHVKISLCHGNPSFSSETKSACKEEDSELDNNGCSTQEVNITEFQLKENYLKMHQAFHVNATVTEEGTGSEFSGSGRIEVERTRNKFLFLKADSHFRHGIPFFVKIRLVDIKGDPIPNEQVFIKAQEAGYTNATTTDQHGLAKFSIDTSSISGYSLNIKVYHKEESSCIHSSCTAERHAEEHHTAYAVYSLSKSYIYLDTEAGVLPCNQIHTVQAHFILKGQVLGVLPQIVFHYLVMAQGSILQTGNHTHQVEPGVSQVQGNFALEIPVEFSMVPVAKMLIYTILPDGEVIADSVTFQVEKCLRNKVHLSFSPSQSLPASQTHMRVTASPQSLCGLRAVDQSVLLLKPEAELSPSLIYDLPGMQDSNFIPSSYHPFEDEYDCLMYQPRDTEELTYSVPYGREKDVYRYVRDMGLTAFTNLKIKHPTYCYEMNMVVLSAPAVESELSPRGGEFEMMPLGVNKSPLPKEPPRKDPPPKDPVIETIRNYFPETWIWDLVTVNSSGVTEVEMTVPDTITEWKAGALCLSNDTGLGLSSVATLQAFQPFFVELTMPYSVIRGEAFMLKATVMNYLPTSLPMAVQLEASPDFTAVPVGNDQDSYCLGANGRHTSSWLVTPKSLGNVNFSVSVEAQQSPELCGSQVATVPETGRKDTVVKVLIVEPEGIKKEHTFSSLLCASDAELSETLSLLLPPTVVKDSARAHFSVMGDILSSAIKNTQNLIQMPYGCGEQNMVLFAPNIYVLKYLNETQQLTEKIKSKALGYLRAGYQRELNYKHKDGSYSAFGDHNGQGQGNTWLTAFVLKSFAQARAFIFIDESHITDAFTWLSKQQKDSGCFRSSGSLFNNAMKGGVDDEITLSAYITMALLESSLPDTDPVVSKALGCLEASWETIEQGRNGSFVYTKTLMAYAFALAGNQEKRNEILKSLDKEAIREDNSIHWERPQKPTKSEGYLYTPQASSAEVEMSAYVVLARLTAQPAPSPEDLALSMGTIKWLTKQQNSHGGFSSTQDTVVALDALSKYGAATFSKSQKTPLVTIQSSGSFSQKFQVDNSNRLLLQQVSLPDIPGNYTVSVSGEGCVYAQTTLRYNMPLEKQQPAFALKVQTVPLTCNNPKGQNSFQISLEISYTGSRPASNMVIADVKMLSGFIPLKPTVKKLERLEHVSRTEVTTNNVLLYLDQVTNQTLSFSFIIQQDIPVKNLQPAIVKVYDYYETDEVAFAEYSSPCSSDKQNV</sequence>
<name>MUG1_RAT</name>
<protein>
    <recommendedName>
        <fullName>Murinoglobulin-1</fullName>
    </recommendedName>
    <alternativeName>
        <fullName>Alpha-1 inhibitor 3 variant I</fullName>
    </alternativeName>
    <alternativeName>
        <fullName>Alpha-X protein</fullName>
    </alternativeName>
</protein>
<gene>
    <name evidence="13" type="primary">Mug1</name>
    <name type="synonym">A1i3</name>
</gene>